<gene>
    <name evidence="1" type="primary">psbE</name>
    <name type="ordered locus">Npun_F5551</name>
</gene>
<sequence>MSGTTGERPFSDIITSVRYWVIHSITIPALFIAGWLFVSTGLAYDAFGTPRPNEYFTPARQEVPIVKNRFEAKKQVEQFIGK</sequence>
<evidence type="ECO:0000255" key="1">
    <source>
        <dbReference type="HAMAP-Rule" id="MF_00642"/>
    </source>
</evidence>
<protein>
    <recommendedName>
        <fullName evidence="1">Cytochrome b559 subunit alpha</fullName>
    </recommendedName>
    <alternativeName>
        <fullName evidence="1">PSII reaction center subunit V</fullName>
    </alternativeName>
</protein>
<keyword id="KW-0249">Electron transport</keyword>
<keyword id="KW-0349">Heme</keyword>
<keyword id="KW-0408">Iron</keyword>
<keyword id="KW-0472">Membrane</keyword>
<keyword id="KW-0479">Metal-binding</keyword>
<keyword id="KW-0602">Photosynthesis</keyword>
<keyword id="KW-0604">Photosystem II</keyword>
<keyword id="KW-1185">Reference proteome</keyword>
<keyword id="KW-0793">Thylakoid</keyword>
<keyword id="KW-0812">Transmembrane</keyword>
<keyword id="KW-1133">Transmembrane helix</keyword>
<keyword id="KW-0813">Transport</keyword>
<name>PSBE_NOSP7</name>
<comment type="function">
    <text evidence="1">This b-type cytochrome is tightly associated with the reaction center of photosystem II (PSII). PSII is a light-driven water:plastoquinone oxidoreductase that uses light energy to abstract electrons from H(2)O, generating O(2) and a proton gradient subsequently used for ATP formation. It consists of a core antenna complex that captures photons, and an electron transfer chain that converts photonic excitation into a charge separation.</text>
</comment>
<comment type="cofactor">
    <cofactor evidence="1">
        <name>heme b</name>
        <dbReference type="ChEBI" id="CHEBI:60344"/>
    </cofactor>
    <text evidence="1">With its partner (PsbF) binds heme. PSII binds additional chlorophylls, carotenoids and specific lipids.</text>
</comment>
<comment type="subunit">
    <text evidence="1">Heterodimer of an alpha subunit and a beta subunit. PSII is composed of 1 copy each of membrane proteins PsbA, PsbB, PsbC, PsbD, PsbE, PsbF, PsbH, PsbI, PsbJ, PsbK, PsbL, PsbM, PsbT, PsbX, PsbY, PsbZ, Psb30/Ycf12, peripheral proteins PsbO, CyanoQ (PsbQ), PsbU, PsbV and a large number of cofactors. It forms dimeric complexes.</text>
</comment>
<comment type="subcellular location">
    <subcellularLocation>
        <location evidence="1">Cellular thylakoid membrane</location>
        <topology evidence="1">Single-pass membrane protein</topology>
    </subcellularLocation>
</comment>
<comment type="similarity">
    <text evidence="1">Belongs to the PsbE/PsbF family.</text>
</comment>
<feature type="chain" id="PRO_1000130901" description="Cytochrome b559 subunit alpha">
    <location>
        <begin position="1"/>
        <end position="82"/>
    </location>
</feature>
<feature type="transmembrane region" description="Helical" evidence="1">
    <location>
        <begin position="21"/>
        <end position="35"/>
    </location>
</feature>
<feature type="binding site" description="axial binding residue" evidence="1">
    <location>
        <position position="23"/>
    </location>
    <ligand>
        <name>heme</name>
        <dbReference type="ChEBI" id="CHEBI:30413"/>
        <note>ligand shared with beta subunit</note>
    </ligand>
    <ligandPart>
        <name>Fe</name>
        <dbReference type="ChEBI" id="CHEBI:18248"/>
    </ligandPart>
</feature>
<reference key="1">
    <citation type="journal article" date="2013" name="Plant Physiol.">
        <title>A Nostoc punctiforme Sugar Transporter Necessary to Establish a Cyanobacterium-Plant Symbiosis.</title>
        <authorList>
            <person name="Ekman M."/>
            <person name="Picossi S."/>
            <person name="Campbell E.L."/>
            <person name="Meeks J.C."/>
            <person name="Flores E."/>
        </authorList>
    </citation>
    <scope>NUCLEOTIDE SEQUENCE [LARGE SCALE GENOMIC DNA]</scope>
    <source>
        <strain>ATCC 29133 / PCC 73102</strain>
    </source>
</reference>
<organism>
    <name type="scientific">Nostoc punctiforme (strain ATCC 29133 / PCC 73102)</name>
    <dbReference type="NCBI Taxonomy" id="63737"/>
    <lineage>
        <taxon>Bacteria</taxon>
        <taxon>Bacillati</taxon>
        <taxon>Cyanobacteriota</taxon>
        <taxon>Cyanophyceae</taxon>
        <taxon>Nostocales</taxon>
        <taxon>Nostocaceae</taxon>
        <taxon>Nostoc</taxon>
    </lineage>
</organism>
<accession>B2J6T0</accession>
<proteinExistence type="inferred from homology"/>
<dbReference type="EMBL" id="CP001037">
    <property type="protein sequence ID" value="ACC83856.1"/>
    <property type="molecule type" value="Genomic_DNA"/>
</dbReference>
<dbReference type="RefSeq" id="WP_012411800.1">
    <property type="nucleotide sequence ID" value="NC_010628.1"/>
</dbReference>
<dbReference type="SMR" id="B2J6T0"/>
<dbReference type="STRING" id="63737.Npun_F5551"/>
<dbReference type="EnsemblBacteria" id="ACC83856">
    <property type="protein sequence ID" value="ACC83856"/>
    <property type="gene ID" value="Npun_F5551"/>
</dbReference>
<dbReference type="KEGG" id="npu:Npun_F5551"/>
<dbReference type="eggNOG" id="ENOG5032RR6">
    <property type="taxonomic scope" value="Bacteria"/>
</dbReference>
<dbReference type="HOGENOM" id="CLU_194095_0_0_3"/>
<dbReference type="OrthoDB" id="514620at2"/>
<dbReference type="PhylomeDB" id="B2J6T0"/>
<dbReference type="Proteomes" id="UP000001191">
    <property type="component" value="Chromosome"/>
</dbReference>
<dbReference type="GO" id="GO:0009539">
    <property type="term" value="C:photosystem II reaction center"/>
    <property type="evidence" value="ECO:0007669"/>
    <property type="project" value="InterPro"/>
</dbReference>
<dbReference type="GO" id="GO:0031676">
    <property type="term" value="C:plasma membrane-derived thylakoid membrane"/>
    <property type="evidence" value="ECO:0007669"/>
    <property type="project" value="UniProtKB-SubCell"/>
</dbReference>
<dbReference type="GO" id="GO:0009055">
    <property type="term" value="F:electron transfer activity"/>
    <property type="evidence" value="ECO:0007669"/>
    <property type="project" value="UniProtKB-UniRule"/>
</dbReference>
<dbReference type="GO" id="GO:0020037">
    <property type="term" value="F:heme binding"/>
    <property type="evidence" value="ECO:0007669"/>
    <property type="project" value="InterPro"/>
</dbReference>
<dbReference type="GO" id="GO:0005506">
    <property type="term" value="F:iron ion binding"/>
    <property type="evidence" value="ECO:0007669"/>
    <property type="project" value="UniProtKB-UniRule"/>
</dbReference>
<dbReference type="GO" id="GO:0009767">
    <property type="term" value="P:photosynthetic electron transport chain"/>
    <property type="evidence" value="ECO:0007669"/>
    <property type="project" value="InterPro"/>
</dbReference>
<dbReference type="Gene3D" id="1.20.5.860">
    <property type="entry name" value="Photosystem II cytochrome b559, alpha subunit"/>
    <property type="match status" value="1"/>
</dbReference>
<dbReference type="HAMAP" id="MF_00642">
    <property type="entry name" value="PSII_PsbE"/>
    <property type="match status" value="1"/>
</dbReference>
<dbReference type="InterPro" id="IPR006217">
    <property type="entry name" value="PSII_cyt_b559_asu"/>
</dbReference>
<dbReference type="InterPro" id="IPR037025">
    <property type="entry name" value="PSII_cyt_b559_asu_sf"/>
</dbReference>
<dbReference type="InterPro" id="IPR006216">
    <property type="entry name" value="PSII_cyt_b559_CS"/>
</dbReference>
<dbReference type="InterPro" id="IPR013081">
    <property type="entry name" value="PSII_cyt_b559_N"/>
</dbReference>
<dbReference type="InterPro" id="IPR013082">
    <property type="entry name" value="PSII_cytb559_asu_lum"/>
</dbReference>
<dbReference type="NCBIfam" id="TIGR01332">
    <property type="entry name" value="cyt_b559_alpha"/>
    <property type="match status" value="1"/>
</dbReference>
<dbReference type="PANTHER" id="PTHR33391">
    <property type="entry name" value="CYTOCHROME B559 SUBUNIT BETA-RELATED"/>
    <property type="match status" value="1"/>
</dbReference>
<dbReference type="PANTHER" id="PTHR33391:SF9">
    <property type="entry name" value="CYTOCHROME B559 SUBUNIT BETA-RELATED"/>
    <property type="match status" value="1"/>
</dbReference>
<dbReference type="Pfam" id="PF00283">
    <property type="entry name" value="Cytochrom_B559"/>
    <property type="match status" value="1"/>
</dbReference>
<dbReference type="Pfam" id="PF00284">
    <property type="entry name" value="Cytochrom_B559a"/>
    <property type="match status" value="1"/>
</dbReference>
<dbReference type="PIRSF" id="PIRSF000036">
    <property type="entry name" value="PsbE"/>
    <property type="match status" value="1"/>
</dbReference>
<dbReference type="SUPFAM" id="SSF161045">
    <property type="entry name" value="Cytochrome b559 subunits"/>
    <property type="match status" value="1"/>
</dbReference>
<dbReference type="PROSITE" id="PS00537">
    <property type="entry name" value="CYTOCHROME_B559"/>
    <property type="match status" value="1"/>
</dbReference>